<gene>
    <name evidence="1" type="primary">pheS</name>
    <name type="ordered locus">Tgr7_1454</name>
</gene>
<name>SYFA_THISH</name>
<feature type="chain" id="PRO_1000199331" description="Phenylalanine--tRNA ligase alpha subunit">
    <location>
        <begin position="1"/>
        <end position="339"/>
    </location>
</feature>
<feature type="binding site" evidence="1">
    <location>
        <position position="253"/>
    </location>
    <ligand>
        <name>Mg(2+)</name>
        <dbReference type="ChEBI" id="CHEBI:18420"/>
        <note>shared with beta subunit</note>
    </ligand>
</feature>
<organism>
    <name type="scientific">Thioalkalivibrio sulfidiphilus (strain HL-EbGR7)</name>
    <dbReference type="NCBI Taxonomy" id="396588"/>
    <lineage>
        <taxon>Bacteria</taxon>
        <taxon>Pseudomonadati</taxon>
        <taxon>Pseudomonadota</taxon>
        <taxon>Gammaproteobacteria</taxon>
        <taxon>Chromatiales</taxon>
        <taxon>Ectothiorhodospiraceae</taxon>
        <taxon>Thioalkalivibrio</taxon>
    </lineage>
</organism>
<dbReference type="EC" id="6.1.1.20" evidence="1"/>
<dbReference type="EMBL" id="CP001339">
    <property type="protein sequence ID" value="ACL72538.1"/>
    <property type="molecule type" value="Genomic_DNA"/>
</dbReference>
<dbReference type="RefSeq" id="WP_012638021.1">
    <property type="nucleotide sequence ID" value="NC_011901.1"/>
</dbReference>
<dbReference type="SMR" id="B8GRI4"/>
<dbReference type="STRING" id="396588.Tgr7_1454"/>
<dbReference type="KEGG" id="tgr:Tgr7_1454"/>
<dbReference type="eggNOG" id="COG0016">
    <property type="taxonomic scope" value="Bacteria"/>
</dbReference>
<dbReference type="HOGENOM" id="CLU_025086_0_1_6"/>
<dbReference type="OrthoDB" id="9800719at2"/>
<dbReference type="Proteomes" id="UP000002383">
    <property type="component" value="Chromosome"/>
</dbReference>
<dbReference type="GO" id="GO:0005737">
    <property type="term" value="C:cytoplasm"/>
    <property type="evidence" value="ECO:0007669"/>
    <property type="project" value="UniProtKB-SubCell"/>
</dbReference>
<dbReference type="GO" id="GO:0005524">
    <property type="term" value="F:ATP binding"/>
    <property type="evidence" value="ECO:0007669"/>
    <property type="project" value="UniProtKB-UniRule"/>
</dbReference>
<dbReference type="GO" id="GO:0000287">
    <property type="term" value="F:magnesium ion binding"/>
    <property type="evidence" value="ECO:0007669"/>
    <property type="project" value="UniProtKB-UniRule"/>
</dbReference>
<dbReference type="GO" id="GO:0004826">
    <property type="term" value="F:phenylalanine-tRNA ligase activity"/>
    <property type="evidence" value="ECO:0007669"/>
    <property type="project" value="UniProtKB-UniRule"/>
</dbReference>
<dbReference type="GO" id="GO:0000049">
    <property type="term" value="F:tRNA binding"/>
    <property type="evidence" value="ECO:0007669"/>
    <property type="project" value="InterPro"/>
</dbReference>
<dbReference type="GO" id="GO:0006432">
    <property type="term" value="P:phenylalanyl-tRNA aminoacylation"/>
    <property type="evidence" value="ECO:0007669"/>
    <property type="project" value="UniProtKB-UniRule"/>
</dbReference>
<dbReference type="CDD" id="cd00496">
    <property type="entry name" value="PheRS_alpha_core"/>
    <property type="match status" value="1"/>
</dbReference>
<dbReference type="FunFam" id="3.30.930.10:FF:000003">
    <property type="entry name" value="Phenylalanine--tRNA ligase alpha subunit"/>
    <property type="match status" value="1"/>
</dbReference>
<dbReference type="Gene3D" id="3.30.930.10">
    <property type="entry name" value="Bira Bifunctional Protein, Domain 2"/>
    <property type="match status" value="1"/>
</dbReference>
<dbReference type="HAMAP" id="MF_00281">
    <property type="entry name" value="Phe_tRNA_synth_alpha1"/>
    <property type="match status" value="1"/>
</dbReference>
<dbReference type="InterPro" id="IPR006195">
    <property type="entry name" value="aa-tRNA-synth_II"/>
</dbReference>
<dbReference type="InterPro" id="IPR045864">
    <property type="entry name" value="aa-tRNA-synth_II/BPL/LPL"/>
</dbReference>
<dbReference type="InterPro" id="IPR004529">
    <property type="entry name" value="Phe-tRNA-synth_IIc_asu"/>
</dbReference>
<dbReference type="InterPro" id="IPR004188">
    <property type="entry name" value="Phe-tRNA_ligase_II_N"/>
</dbReference>
<dbReference type="InterPro" id="IPR022911">
    <property type="entry name" value="Phe_tRNA_ligase_alpha1_bac"/>
</dbReference>
<dbReference type="InterPro" id="IPR002319">
    <property type="entry name" value="Phenylalanyl-tRNA_Synthase"/>
</dbReference>
<dbReference type="InterPro" id="IPR010978">
    <property type="entry name" value="tRNA-bd_arm"/>
</dbReference>
<dbReference type="NCBIfam" id="TIGR00468">
    <property type="entry name" value="pheS"/>
    <property type="match status" value="1"/>
</dbReference>
<dbReference type="PANTHER" id="PTHR11538:SF41">
    <property type="entry name" value="PHENYLALANINE--TRNA LIGASE, MITOCHONDRIAL"/>
    <property type="match status" value="1"/>
</dbReference>
<dbReference type="PANTHER" id="PTHR11538">
    <property type="entry name" value="PHENYLALANYL-TRNA SYNTHETASE"/>
    <property type="match status" value="1"/>
</dbReference>
<dbReference type="Pfam" id="PF02912">
    <property type="entry name" value="Phe_tRNA-synt_N"/>
    <property type="match status" value="1"/>
</dbReference>
<dbReference type="Pfam" id="PF01409">
    <property type="entry name" value="tRNA-synt_2d"/>
    <property type="match status" value="1"/>
</dbReference>
<dbReference type="SUPFAM" id="SSF55681">
    <property type="entry name" value="Class II aaRS and biotin synthetases"/>
    <property type="match status" value="1"/>
</dbReference>
<dbReference type="SUPFAM" id="SSF46589">
    <property type="entry name" value="tRNA-binding arm"/>
    <property type="match status" value="1"/>
</dbReference>
<dbReference type="PROSITE" id="PS50862">
    <property type="entry name" value="AA_TRNA_LIGASE_II"/>
    <property type="match status" value="1"/>
</dbReference>
<protein>
    <recommendedName>
        <fullName evidence="1">Phenylalanine--tRNA ligase alpha subunit</fullName>
        <ecNumber evidence="1">6.1.1.20</ecNumber>
    </recommendedName>
    <alternativeName>
        <fullName evidence="1">Phenylalanyl-tRNA synthetase alpha subunit</fullName>
        <shortName evidence="1">PheRS</shortName>
    </alternativeName>
</protein>
<reference key="1">
    <citation type="journal article" date="2011" name="Stand. Genomic Sci.">
        <title>Complete genome sequence of 'Thioalkalivibrio sulfidophilus' HL-EbGr7.</title>
        <authorList>
            <person name="Muyzer G."/>
            <person name="Sorokin D.Y."/>
            <person name="Mavromatis K."/>
            <person name="Lapidus A."/>
            <person name="Clum A."/>
            <person name="Ivanova N."/>
            <person name="Pati A."/>
            <person name="d'Haeseleer P."/>
            <person name="Woyke T."/>
            <person name="Kyrpides N.C."/>
        </authorList>
    </citation>
    <scope>NUCLEOTIDE SEQUENCE [LARGE SCALE GENOMIC DNA]</scope>
    <source>
        <strain>HL-EbGR7</strain>
    </source>
</reference>
<sequence length="339" mass="37842">MEQLQNLIRDALKAIDGATDTQALDALRVQYLGKKGVLTEQLKALGKLPPEERPAAGQAINRAKETVNEALSARLEALSAAEQEARLALESVDVTLPGRRQAVGGLHPVTRTIERITDLLGQLGFQVAEGPEVEDDYHNFEALNIPAHHPARAMHDTFYFDANRLLRTHTSPVQVRVMEQGRPPFRVIAPGRVYRCDSDLTHSPMFHQVEGLLVDEGVTFAHLRGVLDAFLQAFFEQSELKTRFRPSYFPFTEPSAEVDIQCVHCGGDGCRVCSHTGWLEVMGCGMVHPNVFAHVGIDSERYTGFAFGLGVERMAMLRYGVNDLRLFFENDVRFLRQFA</sequence>
<comment type="catalytic activity">
    <reaction evidence="1">
        <text>tRNA(Phe) + L-phenylalanine + ATP = L-phenylalanyl-tRNA(Phe) + AMP + diphosphate + H(+)</text>
        <dbReference type="Rhea" id="RHEA:19413"/>
        <dbReference type="Rhea" id="RHEA-COMP:9668"/>
        <dbReference type="Rhea" id="RHEA-COMP:9699"/>
        <dbReference type="ChEBI" id="CHEBI:15378"/>
        <dbReference type="ChEBI" id="CHEBI:30616"/>
        <dbReference type="ChEBI" id="CHEBI:33019"/>
        <dbReference type="ChEBI" id="CHEBI:58095"/>
        <dbReference type="ChEBI" id="CHEBI:78442"/>
        <dbReference type="ChEBI" id="CHEBI:78531"/>
        <dbReference type="ChEBI" id="CHEBI:456215"/>
        <dbReference type="EC" id="6.1.1.20"/>
    </reaction>
</comment>
<comment type="cofactor">
    <cofactor evidence="1">
        <name>Mg(2+)</name>
        <dbReference type="ChEBI" id="CHEBI:18420"/>
    </cofactor>
    <text evidence="1">Binds 2 magnesium ions per tetramer.</text>
</comment>
<comment type="subunit">
    <text evidence="1">Tetramer of two alpha and two beta subunits.</text>
</comment>
<comment type="subcellular location">
    <subcellularLocation>
        <location evidence="1">Cytoplasm</location>
    </subcellularLocation>
</comment>
<comment type="similarity">
    <text evidence="1">Belongs to the class-II aminoacyl-tRNA synthetase family. Phe-tRNA synthetase alpha subunit type 1 subfamily.</text>
</comment>
<accession>B8GRI4</accession>
<evidence type="ECO:0000255" key="1">
    <source>
        <dbReference type="HAMAP-Rule" id="MF_00281"/>
    </source>
</evidence>
<proteinExistence type="inferred from homology"/>
<keyword id="KW-0030">Aminoacyl-tRNA synthetase</keyword>
<keyword id="KW-0067">ATP-binding</keyword>
<keyword id="KW-0963">Cytoplasm</keyword>
<keyword id="KW-0436">Ligase</keyword>
<keyword id="KW-0460">Magnesium</keyword>
<keyword id="KW-0479">Metal-binding</keyword>
<keyword id="KW-0547">Nucleotide-binding</keyword>
<keyword id="KW-0648">Protein biosynthesis</keyword>
<keyword id="KW-1185">Reference proteome</keyword>